<proteinExistence type="inferred from homology"/>
<gene>
    <name evidence="1" type="primary">der</name>
    <name type="synonym">engA</name>
    <name type="ordered locus">c3033</name>
</gene>
<name>DER_ECOL6</name>
<sequence length="490" mass="54993">MVPVVALVGRPNVGKSTLFNRLTRTRDALVADFPGLTRDRKYGRAEIEGREFICIDTGGIDGTEDGVETRMAEQSLLAIEEADVVLFMVDARAGLMPADEAIAKHLRSREKPTFLVANKTDGLDPDQAVVDFYALGLGEIYPIAASHGRGVLSLLEHVLLPWMEDLAPQEEVDEDAEYWAQFEAEENGEEEEEDDFDPQSLPIKLAIVGRPNVGKSTLTNRILGEERVVVYDMPGTTRDSIYIPMERDGREYVLIDTAGVRKRGKITDAVEKFSVIKTLQAIEDANVVMLVIDAREGISDQDLSLLGFILNSGRSLVIVVNKWDGLSQEVKEQVKETLDFRLGFIDFARVHFISALHGSGVGNLFESVREAYDSSTRRVGTSMLTRIMTMAVEDHQPPLVRGRRVKLKYAHAGGYNPPIVVIHGNQVKDLPDSYKRYLMNYFRKSLDVMGSPIRIQFKEGENPYANKRNTLTPTQMRKRKRLMKHIKKSK</sequence>
<accession>Q8FF59</accession>
<organism>
    <name type="scientific">Escherichia coli O6:H1 (strain CFT073 / ATCC 700928 / UPEC)</name>
    <dbReference type="NCBI Taxonomy" id="199310"/>
    <lineage>
        <taxon>Bacteria</taxon>
        <taxon>Pseudomonadati</taxon>
        <taxon>Pseudomonadota</taxon>
        <taxon>Gammaproteobacteria</taxon>
        <taxon>Enterobacterales</taxon>
        <taxon>Enterobacteriaceae</taxon>
        <taxon>Escherichia</taxon>
    </lineage>
</organism>
<feature type="chain" id="PRO_0000178993" description="GTPase Der">
    <location>
        <begin position="1"/>
        <end position="490"/>
    </location>
</feature>
<feature type="domain" description="EngA-type G 1">
    <location>
        <begin position="3"/>
        <end position="166"/>
    </location>
</feature>
<feature type="domain" description="EngA-type G 2">
    <location>
        <begin position="203"/>
        <end position="376"/>
    </location>
</feature>
<feature type="domain" description="KH-like" evidence="1">
    <location>
        <begin position="377"/>
        <end position="461"/>
    </location>
</feature>
<feature type="binding site" evidence="1">
    <location>
        <begin position="9"/>
        <end position="16"/>
    </location>
    <ligand>
        <name>GTP</name>
        <dbReference type="ChEBI" id="CHEBI:37565"/>
        <label>1</label>
    </ligand>
</feature>
<feature type="binding site" evidence="1">
    <location>
        <begin position="56"/>
        <end position="60"/>
    </location>
    <ligand>
        <name>GTP</name>
        <dbReference type="ChEBI" id="CHEBI:37565"/>
        <label>1</label>
    </ligand>
</feature>
<feature type="binding site" evidence="1">
    <location>
        <begin position="118"/>
        <end position="121"/>
    </location>
    <ligand>
        <name>GTP</name>
        <dbReference type="ChEBI" id="CHEBI:37565"/>
        <label>1</label>
    </ligand>
</feature>
<feature type="binding site" evidence="1">
    <location>
        <begin position="209"/>
        <end position="216"/>
    </location>
    <ligand>
        <name>GTP</name>
        <dbReference type="ChEBI" id="CHEBI:37565"/>
        <label>2</label>
    </ligand>
</feature>
<feature type="binding site" evidence="1">
    <location>
        <begin position="256"/>
        <end position="260"/>
    </location>
    <ligand>
        <name>GTP</name>
        <dbReference type="ChEBI" id="CHEBI:37565"/>
        <label>2</label>
    </ligand>
</feature>
<feature type="binding site" evidence="1">
    <location>
        <begin position="321"/>
        <end position="324"/>
    </location>
    <ligand>
        <name>GTP</name>
        <dbReference type="ChEBI" id="CHEBI:37565"/>
        <label>2</label>
    </ligand>
</feature>
<evidence type="ECO:0000255" key="1">
    <source>
        <dbReference type="HAMAP-Rule" id="MF_00195"/>
    </source>
</evidence>
<evidence type="ECO:0000305" key="2"/>
<protein>
    <recommendedName>
        <fullName evidence="1">GTPase Der</fullName>
    </recommendedName>
    <alternativeName>
        <fullName evidence="1">GTP-binding protein EngA</fullName>
    </alternativeName>
</protein>
<reference key="1">
    <citation type="journal article" date="2002" name="Proc. Natl. Acad. Sci. U.S.A.">
        <title>Extensive mosaic structure revealed by the complete genome sequence of uropathogenic Escherichia coli.</title>
        <authorList>
            <person name="Welch R.A."/>
            <person name="Burland V."/>
            <person name="Plunkett G. III"/>
            <person name="Redford P."/>
            <person name="Roesch P."/>
            <person name="Rasko D."/>
            <person name="Buckles E.L."/>
            <person name="Liou S.-R."/>
            <person name="Boutin A."/>
            <person name="Hackett J."/>
            <person name="Stroud D."/>
            <person name="Mayhew G.F."/>
            <person name="Rose D.J."/>
            <person name="Zhou S."/>
            <person name="Schwartz D.C."/>
            <person name="Perna N.T."/>
            <person name="Mobley H.L.T."/>
            <person name="Donnenberg M.S."/>
            <person name="Blattner F.R."/>
        </authorList>
    </citation>
    <scope>NUCLEOTIDE SEQUENCE [LARGE SCALE GENOMIC DNA]</scope>
    <source>
        <strain>CFT073 / ATCC 700928 / UPEC</strain>
    </source>
</reference>
<dbReference type="EMBL" id="AE014075">
    <property type="protein sequence ID" value="AAN81483.1"/>
    <property type="status" value="ALT_INIT"/>
    <property type="molecule type" value="Genomic_DNA"/>
</dbReference>
<dbReference type="RefSeq" id="WP_001296291.1">
    <property type="nucleotide sequence ID" value="NZ_CP051263.1"/>
</dbReference>
<dbReference type="SMR" id="Q8FF59"/>
<dbReference type="STRING" id="199310.c3033"/>
<dbReference type="KEGG" id="ecc:c3033"/>
<dbReference type="eggNOG" id="COG1160">
    <property type="taxonomic scope" value="Bacteria"/>
</dbReference>
<dbReference type="HOGENOM" id="CLU_016077_5_1_6"/>
<dbReference type="Proteomes" id="UP000001410">
    <property type="component" value="Chromosome"/>
</dbReference>
<dbReference type="GO" id="GO:0005525">
    <property type="term" value="F:GTP binding"/>
    <property type="evidence" value="ECO:0007669"/>
    <property type="project" value="UniProtKB-UniRule"/>
</dbReference>
<dbReference type="GO" id="GO:0043022">
    <property type="term" value="F:ribosome binding"/>
    <property type="evidence" value="ECO:0007669"/>
    <property type="project" value="TreeGrafter"/>
</dbReference>
<dbReference type="GO" id="GO:0042254">
    <property type="term" value="P:ribosome biogenesis"/>
    <property type="evidence" value="ECO:0007669"/>
    <property type="project" value="UniProtKB-KW"/>
</dbReference>
<dbReference type="CDD" id="cd01894">
    <property type="entry name" value="EngA1"/>
    <property type="match status" value="1"/>
</dbReference>
<dbReference type="CDD" id="cd01895">
    <property type="entry name" value="EngA2"/>
    <property type="match status" value="1"/>
</dbReference>
<dbReference type="FunFam" id="3.30.300.20:FF:000004">
    <property type="entry name" value="GTPase Der"/>
    <property type="match status" value="1"/>
</dbReference>
<dbReference type="FunFam" id="3.40.50.300:FF:000040">
    <property type="entry name" value="GTPase Der"/>
    <property type="match status" value="1"/>
</dbReference>
<dbReference type="FunFam" id="3.40.50.300:FF:000057">
    <property type="entry name" value="GTPase Der"/>
    <property type="match status" value="1"/>
</dbReference>
<dbReference type="Gene3D" id="3.30.300.20">
    <property type="match status" value="1"/>
</dbReference>
<dbReference type="Gene3D" id="3.40.50.300">
    <property type="entry name" value="P-loop containing nucleotide triphosphate hydrolases"/>
    <property type="match status" value="2"/>
</dbReference>
<dbReference type="HAMAP" id="MF_00195">
    <property type="entry name" value="GTPase_Der"/>
    <property type="match status" value="1"/>
</dbReference>
<dbReference type="InterPro" id="IPR031166">
    <property type="entry name" value="G_ENGA"/>
</dbReference>
<dbReference type="InterPro" id="IPR006073">
    <property type="entry name" value="GTP-bd"/>
</dbReference>
<dbReference type="InterPro" id="IPR016484">
    <property type="entry name" value="GTPase_Der"/>
</dbReference>
<dbReference type="InterPro" id="IPR032859">
    <property type="entry name" value="KH_dom-like"/>
</dbReference>
<dbReference type="InterPro" id="IPR015946">
    <property type="entry name" value="KH_dom-like_a/b"/>
</dbReference>
<dbReference type="InterPro" id="IPR027417">
    <property type="entry name" value="P-loop_NTPase"/>
</dbReference>
<dbReference type="InterPro" id="IPR005225">
    <property type="entry name" value="Small_GTP-bd"/>
</dbReference>
<dbReference type="NCBIfam" id="TIGR03594">
    <property type="entry name" value="GTPase_EngA"/>
    <property type="match status" value="1"/>
</dbReference>
<dbReference type="NCBIfam" id="TIGR00231">
    <property type="entry name" value="small_GTP"/>
    <property type="match status" value="2"/>
</dbReference>
<dbReference type="PANTHER" id="PTHR43834">
    <property type="entry name" value="GTPASE DER"/>
    <property type="match status" value="1"/>
</dbReference>
<dbReference type="PANTHER" id="PTHR43834:SF6">
    <property type="entry name" value="GTPASE DER"/>
    <property type="match status" value="1"/>
</dbReference>
<dbReference type="Pfam" id="PF14714">
    <property type="entry name" value="KH_dom-like"/>
    <property type="match status" value="1"/>
</dbReference>
<dbReference type="Pfam" id="PF01926">
    <property type="entry name" value="MMR_HSR1"/>
    <property type="match status" value="2"/>
</dbReference>
<dbReference type="PIRSF" id="PIRSF006485">
    <property type="entry name" value="GTP-binding_EngA"/>
    <property type="match status" value="1"/>
</dbReference>
<dbReference type="PRINTS" id="PR00326">
    <property type="entry name" value="GTP1OBG"/>
</dbReference>
<dbReference type="SUPFAM" id="SSF52540">
    <property type="entry name" value="P-loop containing nucleoside triphosphate hydrolases"/>
    <property type="match status" value="2"/>
</dbReference>
<dbReference type="PROSITE" id="PS51712">
    <property type="entry name" value="G_ENGA"/>
    <property type="match status" value="2"/>
</dbReference>
<keyword id="KW-0342">GTP-binding</keyword>
<keyword id="KW-0547">Nucleotide-binding</keyword>
<keyword id="KW-1185">Reference proteome</keyword>
<keyword id="KW-0677">Repeat</keyword>
<keyword id="KW-0690">Ribosome biogenesis</keyword>
<comment type="function">
    <text evidence="1">GTPase that plays an essential role in the late steps of ribosome biogenesis.</text>
</comment>
<comment type="subunit">
    <text evidence="1">Associates with the 50S ribosomal subunit.</text>
</comment>
<comment type="similarity">
    <text evidence="1">Belongs to the TRAFAC class TrmE-Era-EngA-EngB-Septin-like GTPase superfamily. EngA (Der) GTPase family.</text>
</comment>
<comment type="sequence caution" evidence="2">
    <conflict type="erroneous initiation">
        <sequence resource="EMBL-CDS" id="AAN81483"/>
    </conflict>
    <text>Extended N-terminus.</text>
</comment>